<dbReference type="EMBL" id="AAFC03089057">
    <property type="status" value="NOT_ANNOTATED_CDS"/>
    <property type="molecule type" value="Genomic_DNA"/>
</dbReference>
<dbReference type="RefSeq" id="NP_001192488.1">
    <property type="nucleotide sequence ID" value="NM_001205559.1"/>
</dbReference>
<dbReference type="FunCoup" id="E1BJD3">
    <property type="interactions" value="76"/>
</dbReference>
<dbReference type="STRING" id="9913.ENSBTAP00000065442"/>
<dbReference type="PaxDb" id="9913-ENSBTAP00000028044"/>
<dbReference type="GeneID" id="504932"/>
<dbReference type="KEGG" id="bta:504932"/>
<dbReference type="CTD" id="147744"/>
<dbReference type="VEuPathDB" id="HostDB:ENSBTAG00000021057"/>
<dbReference type="eggNOG" id="ENOG502T0Q7">
    <property type="taxonomic scope" value="Eukaryota"/>
</dbReference>
<dbReference type="HOGENOM" id="CLU_130475_0_0_1"/>
<dbReference type="InParanoid" id="E1BJD3"/>
<dbReference type="OrthoDB" id="9529881at2759"/>
<dbReference type="TreeFam" id="TF337652"/>
<dbReference type="Proteomes" id="UP000009136">
    <property type="component" value="Chromosome 18"/>
</dbReference>
<dbReference type="Bgee" id="ENSBTAG00000021057">
    <property type="expression patterns" value="Expressed in dorsal thalamus and 76 other cell types or tissues"/>
</dbReference>
<dbReference type="GO" id="GO:0002079">
    <property type="term" value="C:inner acrosomal membrane"/>
    <property type="evidence" value="ECO:0000318"/>
    <property type="project" value="GO_Central"/>
</dbReference>
<dbReference type="GO" id="GO:0002244">
    <property type="term" value="P:hematopoietic progenitor cell differentiation"/>
    <property type="evidence" value="ECO:0000318"/>
    <property type="project" value="GO_Central"/>
</dbReference>
<dbReference type="InterPro" id="IPR044913">
    <property type="entry name" value="P_trefoil_dom_sf"/>
</dbReference>
<dbReference type="InterPro" id="IPR028248">
    <property type="entry name" value="TMEM190"/>
</dbReference>
<dbReference type="PANTHER" id="PTHR37868">
    <property type="entry name" value="TRANSMEMBRANE PROTEIN 190"/>
    <property type="match status" value="1"/>
</dbReference>
<dbReference type="PANTHER" id="PTHR37868:SF1">
    <property type="entry name" value="TRANSMEMBRANE PROTEIN 190"/>
    <property type="match status" value="1"/>
</dbReference>
<dbReference type="Pfam" id="PF15431">
    <property type="entry name" value="TMEM190"/>
    <property type="match status" value="1"/>
</dbReference>
<dbReference type="SUPFAM" id="SSF57492">
    <property type="entry name" value="Trefoil"/>
    <property type="match status" value="1"/>
</dbReference>
<keyword id="KW-1015">Disulfide bond</keyword>
<keyword id="KW-0472">Membrane</keyword>
<keyword id="KW-1185">Reference proteome</keyword>
<keyword id="KW-0732">Signal</keyword>
<keyword id="KW-0812">Transmembrane</keyword>
<keyword id="KW-1133">Transmembrane helix</keyword>
<evidence type="ECO:0000250" key="1"/>
<evidence type="ECO:0000255" key="2"/>
<evidence type="ECO:0000256" key="3">
    <source>
        <dbReference type="SAM" id="MobiDB-lite"/>
    </source>
</evidence>
<reference key="1">
    <citation type="journal article" date="2009" name="Science">
        <title>The genome sequence of taurine cattle: a window to ruminant biology and evolution.</title>
        <authorList>
            <consortium name="The bovine genome sequencing and analysis consortium"/>
        </authorList>
    </citation>
    <scope>NUCLEOTIDE SEQUENCE [LARGE SCALE GENOMIC DNA]</scope>
</reference>
<sequence>MVGSGIPALGLLLLMQGSADGNGIQGFFYPWSCEGDVWDRESCGGQAAIENPNLCLRLRCCYRDGVCYHQRPDENMRRKHMWALGWTCGGLLFLITSICLFWWARRHDMLRLPWFLKGKCDLSRTVSLLSKDRTPSEKKTPSVGSIPPAAPTEGALDVSGGTEGEGTEGGEETEGGDEDD</sequence>
<feature type="signal peptide" evidence="2">
    <location>
        <begin position="1"/>
        <end position="21"/>
    </location>
</feature>
<feature type="chain" id="PRO_0000406753" description="Transmembrane protein 190">
    <location>
        <begin position="22"/>
        <end position="180"/>
    </location>
</feature>
<feature type="topological domain" description="Extracellular" evidence="2">
    <location>
        <begin position="22"/>
        <end position="81"/>
    </location>
</feature>
<feature type="transmembrane region" description="Helical" evidence="2">
    <location>
        <begin position="82"/>
        <end position="102"/>
    </location>
</feature>
<feature type="topological domain" description="Cytoplasmic" evidence="2">
    <location>
        <begin position="103"/>
        <end position="180"/>
    </location>
</feature>
<feature type="domain" description="P-type">
    <location>
        <begin position="31"/>
        <end position="71"/>
    </location>
</feature>
<feature type="region of interest" description="Disordered" evidence="3">
    <location>
        <begin position="131"/>
        <end position="180"/>
    </location>
</feature>
<feature type="compositionally biased region" description="Basic and acidic residues" evidence="3">
    <location>
        <begin position="131"/>
        <end position="140"/>
    </location>
</feature>
<feature type="compositionally biased region" description="Acidic residues" evidence="3">
    <location>
        <begin position="165"/>
        <end position="180"/>
    </location>
</feature>
<feature type="disulfide bond" evidence="1">
    <location>
        <begin position="33"/>
        <end position="61"/>
    </location>
</feature>
<feature type="disulfide bond" evidence="1">
    <location>
        <begin position="43"/>
        <end position="60"/>
    </location>
</feature>
<feature type="disulfide bond" evidence="1">
    <location>
        <begin position="55"/>
        <end position="67"/>
    </location>
</feature>
<protein>
    <recommendedName>
        <fullName>Transmembrane protein 190</fullName>
    </recommendedName>
</protein>
<proteinExistence type="inferred from homology"/>
<name>TM190_BOVIN</name>
<organism>
    <name type="scientific">Bos taurus</name>
    <name type="common">Bovine</name>
    <dbReference type="NCBI Taxonomy" id="9913"/>
    <lineage>
        <taxon>Eukaryota</taxon>
        <taxon>Metazoa</taxon>
        <taxon>Chordata</taxon>
        <taxon>Craniata</taxon>
        <taxon>Vertebrata</taxon>
        <taxon>Euteleostomi</taxon>
        <taxon>Mammalia</taxon>
        <taxon>Eutheria</taxon>
        <taxon>Laurasiatheria</taxon>
        <taxon>Artiodactyla</taxon>
        <taxon>Ruminantia</taxon>
        <taxon>Pecora</taxon>
        <taxon>Bovidae</taxon>
        <taxon>Bovinae</taxon>
        <taxon>Bos</taxon>
    </lineage>
</organism>
<accession>E1BJD3</accession>
<gene>
    <name type="primary">TMEM190</name>
</gene>
<comment type="subcellular location">
    <subcellularLocation>
        <location evidence="1">Membrane</location>
        <topology evidence="1">Single-pass type I membrane protein</topology>
    </subcellularLocation>
</comment>